<proteinExistence type="inferred from homology"/>
<accession>A5ISG9</accession>
<feature type="chain" id="PRO_1000078685" description="Protein RecA">
    <location>
        <begin position="1"/>
        <end position="347"/>
    </location>
</feature>
<feature type="region of interest" description="Disordered" evidence="2">
    <location>
        <begin position="325"/>
        <end position="347"/>
    </location>
</feature>
<feature type="compositionally biased region" description="Basic and acidic residues" evidence="2">
    <location>
        <begin position="338"/>
        <end position="347"/>
    </location>
</feature>
<feature type="binding site" evidence="1">
    <location>
        <begin position="65"/>
        <end position="72"/>
    </location>
    <ligand>
        <name>ATP</name>
        <dbReference type="ChEBI" id="CHEBI:30616"/>
    </ligand>
</feature>
<sequence length="347" mass="37657">MDNDRQKALDTVIKNMEKSFGKGAVMKLGDNIGRRVSTTSTGSVTLDNALGVGGYPKGRIIEIYGPESSGKTTVALHAIAEVQSNGGVAAFIDAEHALDPEYAQALGVDIDNLYLSQPDHGEQGLEIAEAFVRSGAVDIVVVDSVAALTPKAEIEGEMGDTHVGLQARLMSQALRKLSGAISKSNTTAIFINQIREKVGVMFGNPETTPGGRALKFYSSVRLEVRRAEQLKQGQEIVGNRTKIKVVKNKVAPPFRVAEVDIMYGQGISKEGELIDLGVENDIVDKSGAWYSYNGERMGQGKENVKMYLKENPQIKEEIDRKLREKLGISDGDVEETEDAPKSLFDEE</sequence>
<keyword id="KW-0067">ATP-binding</keyword>
<keyword id="KW-0963">Cytoplasm</keyword>
<keyword id="KW-0227">DNA damage</keyword>
<keyword id="KW-0233">DNA recombination</keyword>
<keyword id="KW-0234">DNA repair</keyword>
<keyword id="KW-0238">DNA-binding</keyword>
<keyword id="KW-0547">Nucleotide-binding</keyword>
<keyword id="KW-0742">SOS response</keyword>
<name>RECA_STAA9</name>
<dbReference type="EMBL" id="CP000703">
    <property type="protein sequence ID" value="ABQ49142.1"/>
    <property type="molecule type" value="Genomic_DNA"/>
</dbReference>
<dbReference type="RefSeq" id="WP_000368166.1">
    <property type="nucleotide sequence ID" value="NC_009487.1"/>
</dbReference>
<dbReference type="SMR" id="A5ISG9"/>
<dbReference type="KEGG" id="saj:SaurJH9_1345"/>
<dbReference type="HOGENOM" id="CLU_040469_1_2_9"/>
<dbReference type="GO" id="GO:0005829">
    <property type="term" value="C:cytosol"/>
    <property type="evidence" value="ECO:0007669"/>
    <property type="project" value="TreeGrafter"/>
</dbReference>
<dbReference type="GO" id="GO:0005524">
    <property type="term" value="F:ATP binding"/>
    <property type="evidence" value="ECO:0007669"/>
    <property type="project" value="UniProtKB-UniRule"/>
</dbReference>
<dbReference type="GO" id="GO:0016887">
    <property type="term" value="F:ATP hydrolysis activity"/>
    <property type="evidence" value="ECO:0007669"/>
    <property type="project" value="InterPro"/>
</dbReference>
<dbReference type="GO" id="GO:0140664">
    <property type="term" value="F:ATP-dependent DNA damage sensor activity"/>
    <property type="evidence" value="ECO:0007669"/>
    <property type="project" value="InterPro"/>
</dbReference>
<dbReference type="GO" id="GO:0003684">
    <property type="term" value="F:damaged DNA binding"/>
    <property type="evidence" value="ECO:0007669"/>
    <property type="project" value="UniProtKB-UniRule"/>
</dbReference>
<dbReference type="GO" id="GO:0003697">
    <property type="term" value="F:single-stranded DNA binding"/>
    <property type="evidence" value="ECO:0007669"/>
    <property type="project" value="UniProtKB-UniRule"/>
</dbReference>
<dbReference type="GO" id="GO:0006310">
    <property type="term" value="P:DNA recombination"/>
    <property type="evidence" value="ECO:0007669"/>
    <property type="project" value="UniProtKB-UniRule"/>
</dbReference>
<dbReference type="GO" id="GO:0006281">
    <property type="term" value="P:DNA repair"/>
    <property type="evidence" value="ECO:0007669"/>
    <property type="project" value="UniProtKB-UniRule"/>
</dbReference>
<dbReference type="GO" id="GO:0009432">
    <property type="term" value="P:SOS response"/>
    <property type="evidence" value="ECO:0007669"/>
    <property type="project" value="UniProtKB-UniRule"/>
</dbReference>
<dbReference type="CDD" id="cd00983">
    <property type="entry name" value="RecA"/>
    <property type="match status" value="1"/>
</dbReference>
<dbReference type="FunFam" id="3.40.50.300:FF:000087">
    <property type="entry name" value="Recombinase RecA"/>
    <property type="match status" value="1"/>
</dbReference>
<dbReference type="Gene3D" id="3.40.50.300">
    <property type="entry name" value="P-loop containing nucleotide triphosphate hydrolases"/>
    <property type="match status" value="1"/>
</dbReference>
<dbReference type="HAMAP" id="MF_00268">
    <property type="entry name" value="RecA"/>
    <property type="match status" value="1"/>
</dbReference>
<dbReference type="InterPro" id="IPR003593">
    <property type="entry name" value="AAA+_ATPase"/>
</dbReference>
<dbReference type="InterPro" id="IPR013765">
    <property type="entry name" value="DNA_recomb/repair_RecA"/>
</dbReference>
<dbReference type="InterPro" id="IPR020584">
    <property type="entry name" value="DNA_recomb/repair_RecA_CS"/>
</dbReference>
<dbReference type="InterPro" id="IPR027417">
    <property type="entry name" value="P-loop_NTPase"/>
</dbReference>
<dbReference type="InterPro" id="IPR049261">
    <property type="entry name" value="RecA-like_C"/>
</dbReference>
<dbReference type="InterPro" id="IPR049428">
    <property type="entry name" value="RecA-like_N"/>
</dbReference>
<dbReference type="InterPro" id="IPR020588">
    <property type="entry name" value="RecA_ATP-bd"/>
</dbReference>
<dbReference type="InterPro" id="IPR023400">
    <property type="entry name" value="RecA_C_sf"/>
</dbReference>
<dbReference type="InterPro" id="IPR020587">
    <property type="entry name" value="RecA_monomer-monomer_interface"/>
</dbReference>
<dbReference type="NCBIfam" id="TIGR02012">
    <property type="entry name" value="tigrfam_recA"/>
    <property type="match status" value="1"/>
</dbReference>
<dbReference type="PANTHER" id="PTHR45900:SF1">
    <property type="entry name" value="MITOCHONDRIAL DNA REPAIR PROTEIN RECA HOMOLOG-RELATED"/>
    <property type="match status" value="1"/>
</dbReference>
<dbReference type="PANTHER" id="PTHR45900">
    <property type="entry name" value="RECA"/>
    <property type="match status" value="1"/>
</dbReference>
<dbReference type="Pfam" id="PF00154">
    <property type="entry name" value="RecA"/>
    <property type="match status" value="1"/>
</dbReference>
<dbReference type="Pfam" id="PF21096">
    <property type="entry name" value="RecA_C"/>
    <property type="match status" value="1"/>
</dbReference>
<dbReference type="PRINTS" id="PR00142">
    <property type="entry name" value="RECA"/>
</dbReference>
<dbReference type="SMART" id="SM00382">
    <property type="entry name" value="AAA"/>
    <property type="match status" value="1"/>
</dbReference>
<dbReference type="SUPFAM" id="SSF52540">
    <property type="entry name" value="P-loop containing nucleoside triphosphate hydrolases"/>
    <property type="match status" value="1"/>
</dbReference>
<dbReference type="SUPFAM" id="SSF54752">
    <property type="entry name" value="RecA protein, C-terminal domain"/>
    <property type="match status" value="1"/>
</dbReference>
<dbReference type="PROSITE" id="PS00321">
    <property type="entry name" value="RECA_1"/>
    <property type="match status" value="1"/>
</dbReference>
<dbReference type="PROSITE" id="PS50162">
    <property type="entry name" value="RECA_2"/>
    <property type="match status" value="1"/>
</dbReference>
<dbReference type="PROSITE" id="PS50163">
    <property type="entry name" value="RECA_3"/>
    <property type="match status" value="1"/>
</dbReference>
<comment type="function">
    <text evidence="1">Can catalyze the hydrolysis of ATP in the presence of single-stranded DNA, the ATP-dependent uptake of single-stranded DNA by duplex DNA, and the ATP-dependent hybridization of homologous single-stranded DNAs. It interacts with LexA causing its activation and leading to its autocatalytic cleavage.</text>
</comment>
<comment type="subcellular location">
    <subcellularLocation>
        <location evidence="1">Cytoplasm</location>
    </subcellularLocation>
</comment>
<comment type="similarity">
    <text evidence="1">Belongs to the RecA family.</text>
</comment>
<protein>
    <recommendedName>
        <fullName evidence="1">Protein RecA</fullName>
    </recommendedName>
    <alternativeName>
        <fullName evidence="1">Recombinase A</fullName>
    </alternativeName>
</protein>
<reference key="1">
    <citation type="submission" date="2007-05" db="EMBL/GenBank/DDBJ databases">
        <title>Complete sequence of chromosome of Staphylococcus aureus subsp. aureus JH9.</title>
        <authorList>
            <consortium name="US DOE Joint Genome Institute"/>
            <person name="Copeland A."/>
            <person name="Lucas S."/>
            <person name="Lapidus A."/>
            <person name="Barry K."/>
            <person name="Detter J.C."/>
            <person name="Glavina del Rio T."/>
            <person name="Hammon N."/>
            <person name="Israni S."/>
            <person name="Pitluck S."/>
            <person name="Chain P."/>
            <person name="Malfatti S."/>
            <person name="Shin M."/>
            <person name="Vergez L."/>
            <person name="Schmutz J."/>
            <person name="Larimer F."/>
            <person name="Land M."/>
            <person name="Hauser L."/>
            <person name="Kyrpides N."/>
            <person name="Kim E."/>
            <person name="Tomasz A."/>
            <person name="Richardson P."/>
        </authorList>
    </citation>
    <scope>NUCLEOTIDE SEQUENCE [LARGE SCALE GENOMIC DNA]</scope>
    <source>
        <strain>JH9</strain>
    </source>
</reference>
<gene>
    <name evidence="1" type="primary">recA</name>
    <name type="ordered locus">SaurJH9_1345</name>
</gene>
<organism>
    <name type="scientific">Staphylococcus aureus (strain JH9)</name>
    <dbReference type="NCBI Taxonomy" id="359786"/>
    <lineage>
        <taxon>Bacteria</taxon>
        <taxon>Bacillati</taxon>
        <taxon>Bacillota</taxon>
        <taxon>Bacilli</taxon>
        <taxon>Bacillales</taxon>
        <taxon>Staphylococcaceae</taxon>
        <taxon>Staphylococcus</taxon>
    </lineage>
</organism>
<evidence type="ECO:0000255" key="1">
    <source>
        <dbReference type="HAMAP-Rule" id="MF_00268"/>
    </source>
</evidence>
<evidence type="ECO:0000256" key="2">
    <source>
        <dbReference type="SAM" id="MobiDB-lite"/>
    </source>
</evidence>